<dbReference type="EC" id="2.7.2.3" evidence="1"/>
<dbReference type="EMBL" id="X17251">
    <property type="protein sequence ID" value="CAA35114.1"/>
    <property type="molecule type" value="Genomic_DNA"/>
</dbReference>
<dbReference type="PIR" id="S14463">
    <property type="entry name" value="KICRGF"/>
</dbReference>
<dbReference type="SMR" id="P25055"/>
<dbReference type="VEuPathDB" id="TriTrypDB:CFAC1_180007100"/>
<dbReference type="UniPathway" id="UPA00109">
    <property type="reaction ID" value="UER00185"/>
</dbReference>
<dbReference type="GO" id="GO:0005829">
    <property type="term" value="C:cytosol"/>
    <property type="evidence" value="ECO:0007669"/>
    <property type="project" value="TreeGrafter"/>
</dbReference>
<dbReference type="GO" id="GO:0020015">
    <property type="term" value="C:glycosome"/>
    <property type="evidence" value="ECO:0007669"/>
    <property type="project" value="UniProtKB-SubCell"/>
</dbReference>
<dbReference type="GO" id="GO:0043531">
    <property type="term" value="F:ADP binding"/>
    <property type="evidence" value="ECO:0007669"/>
    <property type="project" value="TreeGrafter"/>
</dbReference>
<dbReference type="GO" id="GO:0005524">
    <property type="term" value="F:ATP binding"/>
    <property type="evidence" value="ECO:0007669"/>
    <property type="project" value="UniProtKB-KW"/>
</dbReference>
<dbReference type="GO" id="GO:0046872">
    <property type="term" value="F:metal ion binding"/>
    <property type="evidence" value="ECO:0007669"/>
    <property type="project" value="UniProtKB-KW"/>
</dbReference>
<dbReference type="GO" id="GO:0004618">
    <property type="term" value="F:phosphoglycerate kinase activity"/>
    <property type="evidence" value="ECO:0007669"/>
    <property type="project" value="UniProtKB-EC"/>
</dbReference>
<dbReference type="GO" id="GO:0006094">
    <property type="term" value="P:gluconeogenesis"/>
    <property type="evidence" value="ECO:0007669"/>
    <property type="project" value="TreeGrafter"/>
</dbReference>
<dbReference type="GO" id="GO:0006096">
    <property type="term" value="P:glycolytic process"/>
    <property type="evidence" value="ECO:0007669"/>
    <property type="project" value="UniProtKB-UniPathway"/>
</dbReference>
<dbReference type="CDD" id="cd00318">
    <property type="entry name" value="Phosphoglycerate_kinase"/>
    <property type="match status" value="1"/>
</dbReference>
<dbReference type="FunFam" id="3.40.50.1260:FF:000031">
    <property type="entry name" value="Phosphoglycerate kinase 1"/>
    <property type="match status" value="1"/>
</dbReference>
<dbReference type="Gene3D" id="3.40.50.1260">
    <property type="entry name" value="Phosphoglycerate kinase, N-terminal domain"/>
    <property type="match status" value="3"/>
</dbReference>
<dbReference type="HAMAP" id="MF_00145">
    <property type="entry name" value="Phosphoglyc_kinase"/>
    <property type="match status" value="1"/>
</dbReference>
<dbReference type="InterPro" id="IPR027250">
    <property type="entry name" value="Pgk_euglenozoa"/>
</dbReference>
<dbReference type="InterPro" id="IPR001576">
    <property type="entry name" value="Phosphoglycerate_kinase"/>
</dbReference>
<dbReference type="InterPro" id="IPR015911">
    <property type="entry name" value="Phosphoglycerate_kinase_CS"/>
</dbReference>
<dbReference type="InterPro" id="IPR015824">
    <property type="entry name" value="Phosphoglycerate_kinase_N"/>
</dbReference>
<dbReference type="InterPro" id="IPR036043">
    <property type="entry name" value="Phosphoglycerate_kinase_sf"/>
</dbReference>
<dbReference type="PANTHER" id="PTHR11406">
    <property type="entry name" value="PHOSPHOGLYCERATE KINASE"/>
    <property type="match status" value="1"/>
</dbReference>
<dbReference type="PANTHER" id="PTHR11406:SF23">
    <property type="entry name" value="PHOSPHOGLYCERATE KINASE 1, CHLOROPLASTIC-RELATED"/>
    <property type="match status" value="1"/>
</dbReference>
<dbReference type="Pfam" id="PF00162">
    <property type="entry name" value="PGK"/>
    <property type="match status" value="1"/>
</dbReference>
<dbReference type="PIRSF" id="PIRSF000724">
    <property type="entry name" value="Pgk"/>
    <property type="match status" value="1"/>
</dbReference>
<dbReference type="PIRSF" id="PIRSF500126">
    <property type="entry name" value="Pgk_euglenozoa"/>
    <property type="match status" value="1"/>
</dbReference>
<dbReference type="PRINTS" id="PR00477">
    <property type="entry name" value="PHGLYCKINASE"/>
</dbReference>
<dbReference type="SUPFAM" id="SSF53748">
    <property type="entry name" value="Phosphoglycerate kinase"/>
    <property type="match status" value="1"/>
</dbReference>
<dbReference type="PROSITE" id="PS00111">
    <property type="entry name" value="PGLYCERATE_KINASE"/>
    <property type="match status" value="1"/>
</dbReference>
<name>PGKA_CRIFA</name>
<keyword id="KW-0067">ATP-binding</keyword>
<keyword id="KW-0324">Glycolysis</keyword>
<keyword id="KW-0327">Glycosome</keyword>
<keyword id="KW-0418">Kinase</keyword>
<keyword id="KW-0460">Magnesium</keyword>
<keyword id="KW-0479">Metal-binding</keyword>
<keyword id="KW-0547">Nucleotide-binding</keyword>
<keyword id="KW-0576">Peroxisome</keyword>
<keyword id="KW-0808">Transferase</keyword>
<feature type="chain" id="PRO_0000145848" description="Phosphoglycerate kinase, glycosomal">
    <location>
        <begin position="1"/>
        <end position="505"/>
    </location>
</feature>
<feature type="binding site" evidence="1">
    <location>
        <position position="29"/>
    </location>
    <ligand>
        <name>(2R)-3-phosphoglycerate</name>
        <dbReference type="ChEBI" id="CHEBI:58272"/>
    </ligand>
</feature>
<feature type="binding site" evidence="3">
    <location>
        <position position="30"/>
    </location>
    <ligand>
        <name>(2R)-3-phosphoglycerate</name>
        <dbReference type="ChEBI" id="CHEBI:58272"/>
    </ligand>
</feature>
<feature type="binding site" evidence="1">
    <location>
        <position position="31"/>
    </location>
    <ligand>
        <name>(2R)-3-phosphoglycerate</name>
        <dbReference type="ChEBI" id="CHEBI:58272"/>
    </ligand>
</feature>
<feature type="binding site" evidence="3">
    <location>
        <position position="32"/>
    </location>
    <ligand>
        <name>(2R)-3-phosphoglycerate</name>
        <dbReference type="ChEBI" id="CHEBI:58272"/>
    </ligand>
</feature>
<feature type="binding site" evidence="3">
    <location>
        <position position="45"/>
    </location>
    <ligand>
        <name>(2R)-3-phosphoglycerate</name>
        <dbReference type="ChEBI" id="CHEBI:58272"/>
    </ligand>
</feature>
<feature type="binding site" evidence="1">
    <location>
        <position position="67"/>
    </location>
    <ligand>
        <name>(2R)-3-phosphoglycerate</name>
        <dbReference type="ChEBI" id="CHEBI:58272"/>
    </ligand>
</feature>
<feature type="binding site" evidence="3">
    <location>
        <position position="68"/>
    </location>
    <ligand>
        <name>(2R)-3-phosphoglycerate</name>
        <dbReference type="ChEBI" id="CHEBI:58272"/>
    </ligand>
</feature>
<feature type="binding site" evidence="1">
    <location>
        <position position="70"/>
    </location>
    <ligand>
        <name>(2R)-3-phosphoglycerate</name>
        <dbReference type="ChEBI" id="CHEBI:58272"/>
    </ligand>
</feature>
<feature type="binding site" evidence="3">
    <location>
        <position position="71"/>
    </location>
    <ligand>
        <name>(2R)-3-phosphoglycerate</name>
        <dbReference type="ChEBI" id="CHEBI:58272"/>
    </ligand>
</feature>
<feature type="binding site" evidence="1">
    <location>
        <position position="219"/>
    </location>
    <ligand>
        <name>(2R)-3-phosphoglycerate</name>
        <dbReference type="ChEBI" id="CHEBI:58272"/>
    </ligand>
</feature>
<feature type="binding site" evidence="3">
    <location>
        <position position="220"/>
    </location>
    <ligand>
        <name>(2R)-3-phosphoglycerate</name>
        <dbReference type="ChEBI" id="CHEBI:58272"/>
    </ligand>
</feature>
<feature type="binding site" evidence="1">
    <location>
        <position position="256"/>
    </location>
    <ligand>
        <name>(2R)-3-phosphoglycerate</name>
        <dbReference type="ChEBI" id="CHEBI:58272"/>
    </ligand>
</feature>
<feature type="binding site" evidence="3">
    <location>
        <position position="257"/>
    </location>
    <ligand>
        <name>(2R)-3-phosphoglycerate</name>
        <dbReference type="ChEBI" id="CHEBI:58272"/>
    </ligand>
</feature>
<feature type="binding site" evidence="1">
    <location>
        <position position="302"/>
    </location>
    <ligand>
        <name>ADP</name>
        <dbReference type="ChEBI" id="CHEBI:456216"/>
    </ligand>
</feature>
<feature type="binding site" evidence="1">
    <location>
        <position position="302"/>
    </location>
    <ligand>
        <name>CDP</name>
        <dbReference type="ChEBI" id="CHEBI:58069"/>
    </ligand>
</feature>
<feature type="binding site" evidence="2">
    <location>
        <position position="303"/>
    </location>
    <ligand>
        <name>ADP</name>
        <dbReference type="ChEBI" id="CHEBI:456216"/>
    </ligand>
</feature>
<feature type="binding site" evidence="3">
    <location>
        <position position="303"/>
    </location>
    <ligand>
        <name>AMP</name>
        <dbReference type="ChEBI" id="CHEBI:456215"/>
    </ligand>
</feature>
<feature type="binding site" evidence="3">
    <location>
        <position position="303"/>
    </location>
    <ligand>
        <name>ATP</name>
        <dbReference type="ChEBI" id="CHEBI:30616"/>
    </ligand>
</feature>
<feature type="binding site" evidence="1">
    <location>
        <position position="303"/>
    </location>
    <ligand>
        <name>Mg(2+)</name>
        <dbReference type="ChEBI" id="CHEBI:18420"/>
    </ligand>
</feature>
<feature type="binding site" evidence="2">
    <location>
        <position position="304"/>
    </location>
    <ligand>
        <name>(2R)-3-phosphoglycerate</name>
        <dbReference type="ChEBI" id="CHEBI:58272"/>
    </ligand>
</feature>
<feature type="binding site" evidence="3">
    <location>
        <position position="304"/>
    </location>
    <ligand>
        <name>AMP</name>
        <dbReference type="ChEBI" id="CHEBI:456215"/>
    </ligand>
</feature>
<feature type="binding site" evidence="1">
    <location>
        <position position="307"/>
    </location>
    <ligand>
        <name>CDP</name>
        <dbReference type="ChEBI" id="CHEBI:58069"/>
    </ligand>
</feature>
<feature type="binding site" evidence="1">
    <location>
        <position position="307"/>
    </location>
    <ligand>
        <name>Mg(2+)</name>
        <dbReference type="ChEBI" id="CHEBI:18420"/>
    </ligand>
</feature>
<feature type="binding site" evidence="2">
    <location>
        <position position="308"/>
    </location>
    <ligand>
        <name>ADP</name>
        <dbReference type="ChEBI" id="CHEBI:456216"/>
    </ligand>
</feature>
<feature type="binding site" evidence="3">
    <location>
        <position position="308"/>
    </location>
    <ligand>
        <name>AMP</name>
        <dbReference type="ChEBI" id="CHEBI:456215"/>
    </ligand>
</feature>
<feature type="binding site" evidence="3">
    <location>
        <position position="308"/>
    </location>
    <ligand>
        <name>ATP</name>
        <dbReference type="ChEBI" id="CHEBI:30616"/>
    </ligand>
</feature>
<feature type="binding site" evidence="1">
    <location>
        <position position="326"/>
    </location>
    <ligand>
        <name>ADP</name>
        <dbReference type="ChEBI" id="CHEBI:456216"/>
    </ligand>
</feature>
<feature type="binding site" evidence="1">
    <location>
        <position position="326"/>
    </location>
    <ligand>
        <name>CDP</name>
        <dbReference type="ChEBI" id="CHEBI:58069"/>
    </ligand>
</feature>
<feature type="binding site" evidence="3">
    <location>
        <position position="327"/>
    </location>
    <ligand>
        <name>AMP</name>
        <dbReference type="ChEBI" id="CHEBI:456215"/>
    </ligand>
</feature>
<feature type="binding site" evidence="3">
    <location>
        <position position="327"/>
    </location>
    <ligand>
        <name>ATP</name>
        <dbReference type="ChEBI" id="CHEBI:30616"/>
    </ligand>
</feature>
<feature type="binding site" evidence="2">
    <location>
        <position position="399"/>
    </location>
    <ligand>
        <name>ADP</name>
        <dbReference type="ChEBI" id="CHEBI:456216"/>
    </ligand>
</feature>
<feature type="binding site" evidence="3">
    <location>
        <position position="399"/>
    </location>
    <ligand>
        <name>AMP</name>
        <dbReference type="ChEBI" id="CHEBI:456215"/>
    </ligand>
</feature>
<feature type="binding site" evidence="3">
    <location>
        <position position="399"/>
    </location>
    <ligand>
        <name>ATP</name>
        <dbReference type="ChEBI" id="CHEBI:30616"/>
    </ligand>
</feature>
<feature type="binding site" evidence="2">
    <location>
        <position position="423"/>
    </location>
    <ligand>
        <name>ADP</name>
        <dbReference type="ChEBI" id="CHEBI:456216"/>
    </ligand>
</feature>
<feature type="binding site" evidence="1">
    <location>
        <position position="424"/>
    </location>
    <ligand>
        <name>CDP</name>
        <dbReference type="ChEBI" id="CHEBI:58069"/>
    </ligand>
</feature>
<feature type="binding site" evidence="1">
    <location>
        <position position="426"/>
    </location>
    <ligand>
        <name>CDP</name>
        <dbReference type="ChEBI" id="CHEBI:58069"/>
    </ligand>
</feature>
<feature type="binding site" evidence="1">
    <location>
        <position position="429"/>
    </location>
    <ligand>
        <name>ADP</name>
        <dbReference type="ChEBI" id="CHEBI:456216"/>
    </ligand>
</feature>
<feature type="binding site" evidence="1">
    <location>
        <position position="429"/>
    </location>
    <ligand>
        <name>CDP</name>
        <dbReference type="ChEBI" id="CHEBI:58069"/>
    </ligand>
</feature>
<feature type="binding site" evidence="2">
    <location>
        <position position="430"/>
    </location>
    <ligand>
        <name>ADP</name>
        <dbReference type="ChEBI" id="CHEBI:456216"/>
    </ligand>
</feature>
<feature type="binding site" evidence="3">
    <location>
        <position position="430"/>
    </location>
    <ligand>
        <name>AMP</name>
        <dbReference type="ChEBI" id="CHEBI:456215"/>
    </ligand>
</feature>
<feature type="binding site" evidence="3">
    <location>
        <position position="430"/>
    </location>
    <ligand>
        <name>ATP</name>
        <dbReference type="ChEBI" id="CHEBI:30616"/>
    </ligand>
</feature>
<feature type="binding site" evidence="2">
    <location>
        <position position="462"/>
    </location>
    <ligand>
        <name>ADP</name>
        <dbReference type="ChEBI" id="CHEBI:456216"/>
    </ligand>
</feature>
<feature type="binding site" evidence="3">
    <location>
        <position position="462"/>
    </location>
    <ligand>
        <name>ATP</name>
        <dbReference type="ChEBI" id="CHEBI:30616"/>
    </ligand>
</feature>
<feature type="binding site" evidence="3">
    <location>
        <position position="462"/>
    </location>
    <ligand>
        <name>Mg(2+)</name>
        <dbReference type="ChEBI" id="CHEBI:18420"/>
    </ligand>
</feature>
<feature type="binding site" evidence="2">
    <location>
        <position position="463"/>
    </location>
    <ligand>
        <name>ADP</name>
        <dbReference type="ChEBI" id="CHEBI:456216"/>
    </ligand>
</feature>
<feature type="binding site" evidence="3">
    <location>
        <position position="463"/>
    </location>
    <ligand>
        <name>ATP</name>
        <dbReference type="ChEBI" id="CHEBI:30616"/>
    </ligand>
</feature>
<reference key="1">
    <citation type="journal article" date="1992" name="Mol. Biochem. Parasitol.">
        <title>A phosphoglycerate kinase-related gene conserved between Trypanosoma brucei and Crithidia fasciculata.</title>
        <authorList>
            <person name="Swinkels B.W."/>
            <person name="Loiseau A."/>
            <person name="Opperdoes F.R."/>
            <person name="Borst P.A."/>
        </authorList>
    </citation>
    <scope>NUCLEOTIDE SEQUENCE [GENOMIC DNA]</scope>
</reference>
<organism>
    <name type="scientific">Crithidia fasciculata</name>
    <dbReference type="NCBI Taxonomy" id="5656"/>
    <lineage>
        <taxon>Eukaryota</taxon>
        <taxon>Discoba</taxon>
        <taxon>Euglenozoa</taxon>
        <taxon>Kinetoplastea</taxon>
        <taxon>Metakinetoplastina</taxon>
        <taxon>Trypanosomatida</taxon>
        <taxon>Trypanosomatidae</taxon>
        <taxon>Leishmaniinae</taxon>
        <taxon>Crithidia</taxon>
    </lineage>
</organism>
<protein>
    <recommendedName>
        <fullName>Phosphoglycerate kinase, glycosomal</fullName>
        <shortName>Phosphoglycerate kinase A</shortName>
        <ecNumber evidence="1">2.7.2.3</ecNumber>
    </recommendedName>
</protein>
<accession>P25055</accession>
<comment type="catalytic activity">
    <reaction evidence="1">
        <text>(2R)-3-phosphoglycerate + ATP = (2R)-3-phospho-glyceroyl phosphate + ADP</text>
        <dbReference type="Rhea" id="RHEA:14801"/>
        <dbReference type="ChEBI" id="CHEBI:30616"/>
        <dbReference type="ChEBI" id="CHEBI:57604"/>
        <dbReference type="ChEBI" id="CHEBI:58272"/>
        <dbReference type="ChEBI" id="CHEBI:456216"/>
        <dbReference type="EC" id="2.7.2.3"/>
    </reaction>
</comment>
<comment type="cofactor">
    <cofactor evidence="2">
        <name>Mg(2+)</name>
        <dbReference type="ChEBI" id="CHEBI:18420"/>
    </cofactor>
</comment>
<comment type="pathway">
    <text>Carbohydrate degradation; glycolysis; pyruvate from D-glyceraldehyde 3-phosphate: step 2/5.</text>
</comment>
<comment type="subunit">
    <text>Monomer.</text>
</comment>
<comment type="subcellular location">
    <subcellularLocation>
        <location>Glycosome</location>
    </subcellularLocation>
</comment>
<comment type="similarity">
    <text evidence="4">Belongs to the phosphoglycerate kinase family.</text>
</comment>
<proteinExistence type="inferred from homology"/>
<evidence type="ECO:0000250" key="1">
    <source>
        <dbReference type="UniProtKB" id="P00558"/>
    </source>
</evidence>
<evidence type="ECO:0000250" key="2">
    <source>
        <dbReference type="UniProtKB" id="P07378"/>
    </source>
</evidence>
<evidence type="ECO:0000250" key="3">
    <source>
        <dbReference type="UniProtKB" id="Q7SIB7"/>
    </source>
</evidence>
<evidence type="ECO:0000305" key="4"/>
<gene>
    <name type="primary">PGKA</name>
    <name type="synonym">PGK-A</name>
</gene>
<sequence length="505" mass="54758">MLLSTQSIPIKKSVDDIWPVAGKRVLIRVDFNVPTSSGGIDDDFRIRSAIPTIRRIVDQGGICILISHLGRPTGVDYDTAHAEQEKRQTPVQLPNSRGKTAFFSGLRGDAKATILAWSSQREKAATLSNPYGSGKTAVFARLPEEEKRRLLLRFMSEHKEELFPQLGSAGYEKEFSLEPVAVKLAELLDQHVYFGHDCLGAQADIAKLRCGEVMLLENLRFYTNENSSDERKRMLMARILASYADVYINDAFGTAHRDSASLTGIPRVLQQGAAGYLMEKEISYFSKVLNNPPRPLLAIIGGAKLSDKMQVLENLLDCVDSLFIGGGLAYTFLRSQGYSIGTSHFEEAFVPFAQALPLAGSGRQVRVVLPEDHVCHAHTRPAEAPLTTTSANIPDGYAGLDIGPLTIQSITHLVRQCSSVIWNGPLGMFEMPYYAFGTFSIARVVSQSSAAKGTTSIVGGGDTASAMMKSGEAAHISHISTGGNASLELLEGKVLAAVAVLDNKE</sequence>